<sequence length="636" mass="70097">MATQCYDPENSASRYTLLPDQPDSGHRKSLKIISGIFLSVFLLLSVAFFPILNNQSPDLQIDSRSPAPPSRGVSQGVSDKTFRDVAGASHVSYAWSNAMLSWQRTAYHFQPQKNWMNDPNGPLYHKGWYHLFYQYNPDSAIWGNITWGHAVSKDLIHWLYLPFAMVPDQWYDINGVWTGSATILPDGQIMMLYTGDTDDYVQVQNLAYPANLSDPLLLDWVKFKGNPVLVPPPGIGVKDFRDPTTAWTGPQNGQWLLTIGSKIGKTGVALVYETSNFTSFKLLDGVLHAVPGTGMWECVDFYPVSTKKTNGLDTSYNGPGVKHVLKASLDDNKQDHYAIGTYDLGKNKWTPDNPELDCGIGLRLDYGKYYASKTFYDPKKERRVLWGWIGETDSESADLQKGWASVQSIPRTVLYDKKTGTHLLQWPVEEIESLRVGDPTVKQVDLQPGSIELLRVDSAAELDIEASFEVDKVALQGIIEADHVGFSCSTSGGAASRGILGPFGVIVIADQTLSELTPVYFYISKGADGRAETHFCADQTRSSEAPGVGKQVYGSSVPVLDGEKHSMRLLVDHSIVESFAQGGRTVITSRIYPTKAVNGAARLFVFNNATGASVTASVKIWSLESANIQSFPLQDL</sequence>
<name>INVA_SOLLC</name>
<evidence type="ECO:0000250" key="1">
    <source>
        <dbReference type="UniProtKB" id="P29001"/>
    </source>
</evidence>
<evidence type="ECO:0000250" key="2">
    <source>
        <dbReference type="UniProtKB" id="P80065"/>
    </source>
</evidence>
<evidence type="ECO:0000250" key="3">
    <source>
        <dbReference type="UniProtKB" id="Q39041"/>
    </source>
</evidence>
<evidence type="ECO:0000250" key="4">
    <source>
        <dbReference type="UniProtKB" id="Q43866"/>
    </source>
</evidence>
<evidence type="ECO:0000255" key="5"/>
<evidence type="ECO:0000255" key="6">
    <source>
        <dbReference type="PROSITE-ProRule" id="PRU10067"/>
    </source>
</evidence>
<evidence type="ECO:0000256" key="7">
    <source>
        <dbReference type="SAM" id="MobiDB-lite"/>
    </source>
</evidence>
<evidence type="ECO:0000269" key="8">
    <source>
    </source>
</evidence>
<evidence type="ECO:0000305" key="9"/>
<keyword id="KW-1015">Disulfide bond</keyword>
<keyword id="KW-0325">Glycoprotein</keyword>
<keyword id="KW-0326">Glycosidase</keyword>
<keyword id="KW-0378">Hydrolase</keyword>
<keyword id="KW-0472">Membrane</keyword>
<keyword id="KW-1185">Reference proteome</keyword>
<keyword id="KW-0735">Signal-anchor</keyword>
<keyword id="KW-0812">Transmembrane</keyword>
<keyword id="KW-1133">Transmembrane helix</keyword>
<keyword id="KW-0926">Vacuole</keyword>
<keyword id="KW-0865">Zymogen</keyword>
<proteinExistence type="evidence at transcript level"/>
<dbReference type="EC" id="3.2.1.26"/>
<dbReference type="EMBL" id="Z12025">
    <property type="protein sequence ID" value="CAA78060.1"/>
    <property type="molecule type" value="mRNA"/>
</dbReference>
<dbReference type="EMBL" id="Z12026">
    <property type="protein sequence ID" value="CAA78061.1"/>
    <property type="molecule type" value="mRNA"/>
</dbReference>
<dbReference type="EMBL" id="Z12027">
    <property type="protein sequence ID" value="CAA78062.1"/>
    <property type="molecule type" value="Genomic_DNA"/>
</dbReference>
<dbReference type="EMBL" id="Z12028">
    <property type="protein sequence ID" value="CAA78063.1"/>
    <property type="molecule type" value="Genomic_DNA"/>
</dbReference>
<dbReference type="EMBL" id="M81081">
    <property type="protein sequence ID" value="AAA34132.1"/>
    <property type="molecule type" value="mRNA"/>
</dbReference>
<dbReference type="EMBL" id="D11350">
    <property type="protein sequence ID" value="BAA01954.1"/>
    <property type="molecule type" value="mRNA"/>
</dbReference>
<dbReference type="EMBL" id="X77264">
    <property type="protein sequence ID" value="CAA54480.1"/>
    <property type="molecule type" value="mRNA"/>
</dbReference>
<dbReference type="PIR" id="S31155">
    <property type="entry name" value="S31155"/>
</dbReference>
<dbReference type="RefSeq" id="NP_001234843.2">
    <property type="nucleotide sequence ID" value="NM_001247914.2"/>
</dbReference>
<dbReference type="SMR" id="P29000"/>
<dbReference type="STRING" id="4081.P29000"/>
<dbReference type="CAZy" id="GH32">
    <property type="family name" value="Glycoside Hydrolase Family 32"/>
</dbReference>
<dbReference type="GlyCosmos" id="P29000">
    <property type="glycosylation" value="4 sites, No reported glycans"/>
</dbReference>
<dbReference type="PaxDb" id="4081-Solyc03g083910.2.1"/>
<dbReference type="GeneID" id="543992"/>
<dbReference type="KEGG" id="sly:543992"/>
<dbReference type="eggNOG" id="KOG0228">
    <property type="taxonomic scope" value="Eukaryota"/>
</dbReference>
<dbReference type="InParanoid" id="P29000"/>
<dbReference type="OrthoDB" id="202537at2759"/>
<dbReference type="BRENDA" id="3.2.1.26">
    <property type="organism ID" value="3101"/>
</dbReference>
<dbReference type="SABIO-RK" id="P29000"/>
<dbReference type="UniPathway" id="UPA00238"/>
<dbReference type="Proteomes" id="UP000004994">
    <property type="component" value="Unplaced"/>
</dbReference>
<dbReference type="ExpressionAtlas" id="P29000">
    <property type="expression patterns" value="baseline and differential"/>
</dbReference>
<dbReference type="GO" id="GO:0016020">
    <property type="term" value="C:membrane"/>
    <property type="evidence" value="ECO:0007669"/>
    <property type="project" value="UniProtKB-SubCell"/>
</dbReference>
<dbReference type="GO" id="GO:0005775">
    <property type="term" value="C:vacuolar lumen"/>
    <property type="evidence" value="ECO:0007669"/>
    <property type="project" value="UniProtKB-SubCell"/>
</dbReference>
<dbReference type="GO" id="GO:0004564">
    <property type="term" value="F:beta-fructofuranosidase activity"/>
    <property type="evidence" value="ECO:0007669"/>
    <property type="project" value="UniProtKB-EC"/>
</dbReference>
<dbReference type="GO" id="GO:0005985">
    <property type="term" value="P:sucrose metabolic process"/>
    <property type="evidence" value="ECO:0007669"/>
    <property type="project" value="UniProtKB-UniPathway"/>
</dbReference>
<dbReference type="CDD" id="cd18624">
    <property type="entry name" value="GH32_Fruct1-like"/>
    <property type="match status" value="1"/>
</dbReference>
<dbReference type="FunFam" id="2.115.10.20:FF:000001">
    <property type="entry name" value="Beta-fructofuranosidase, insoluble isoenzyme CWINV1"/>
    <property type="match status" value="1"/>
</dbReference>
<dbReference type="FunFam" id="2.60.120.560:FF:000002">
    <property type="entry name" value="Beta-fructofuranosidase, insoluble isoenzyme CWINV1"/>
    <property type="match status" value="1"/>
</dbReference>
<dbReference type="Gene3D" id="2.60.120.560">
    <property type="entry name" value="Exo-inulinase, domain 1"/>
    <property type="match status" value="1"/>
</dbReference>
<dbReference type="Gene3D" id="2.115.10.20">
    <property type="entry name" value="Glycosyl hydrolase domain, family 43"/>
    <property type="match status" value="1"/>
</dbReference>
<dbReference type="InterPro" id="IPR021792">
    <property type="entry name" value="Beta-fructofuranosidase_N"/>
</dbReference>
<dbReference type="InterPro" id="IPR013320">
    <property type="entry name" value="ConA-like_dom_sf"/>
</dbReference>
<dbReference type="InterPro" id="IPR050551">
    <property type="entry name" value="Fructan_Metab_Enzymes"/>
</dbReference>
<dbReference type="InterPro" id="IPR001362">
    <property type="entry name" value="Glyco_hydro_32"/>
</dbReference>
<dbReference type="InterPro" id="IPR018053">
    <property type="entry name" value="Glyco_hydro_32_AS"/>
</dbReference>
<dbReference type="InterPro" id="IPR013189">
    <property type="entry name" value="Glyco_hydro_32_C"/>
</dbReference>
<dbReference type="InterPro" id="IPR013148">
    <property type="entry name" value="Glyco_hydro_32_N"/>
</dbReference>
<dbReference type="InterPro" id="IPR023296">
    <property type="entry name" value="Glyco_hydro_beta-prop_sf"/>
</dbReference>
<dbReference type="PANTHER" id="PTHR31953">
    <property type="entry name" value="BETA-FRUCTOFURANOSIDASE, INSOLUBLE ISOENZYME CWINV1-RELATED"/>
    <property type="match status" value="1"/>
</dbReference>
<dbReference type="Pfam" id="PF08244">
    <property type="entry name" value="Glyco_hydro_32C"/>
    <property type="match status" value="1"/>
</dbReference>
<dbReference type="Pfam" id="PF00251">
    <property type="entry name" value="Glyco_hydro_32N"/>
    <property type="match status" value="1"/>
</dbReference>
<dbReference type="Pfam" id="PF11837">
    <property type="entry name" value="INV_N"/>
    <property type="match status" value="1"/>
</dbReference>
<dbReference type="SMART" id="SM00640">
    <property type="entry name" value="Glyco_32"/>
    <property type="match status" value="1"/>
</dbReference>
<dbReference type="SUPFAM" id="SSF75005">
    <property type="entry name" value="Arabinanase/levansucrase/invertase"/>
    <property type="match status" value="1"/>
</dbReference>
<dbReference type="SUPFAM" id="SSF49899">
    <property type="entry name" value="Concanavalin A-like lectins/glucanases"/>
    <property type="match status" value="1"/>
</dbReference>
<dbReference type="PROSITE" id="PS00609">
    <property type="entry name" value="GLYCOSYL_HYDROL_F32"/>
    <property type="match status" value="1"/>
</dbReference>
<reference key="1">
    <citation type="journal article" date="1993" name="Plant Mol. Biol.">
        <title>Isolation and characterization of fruit vacuolar invertase genes from two tomato species and temporal differences in mRNA levels during fruit ripening.</title>
        <authorList>
            <person name="Elliott K.J."/>
            <person name="Butler W.O."/>
            <person name="Dickinson C.D."/>
            <person name="Konno Y."/>
            <person name="Vedvick T.S."/>
            <person name="Fitzmaurice L."/>
            <person name="Mirkov T.E."/>
        </authorList>
    </citation>
    <scope>NUCLEOTIDE SEQUENCE [GENOMIC DNA / MRNA]</scope>
    <scope>SUBCELLULAR LOCATION</scope>
    <source>
        <strain>cv. UC82B</strain>
        <strain>Wild-type</strain>
    </source>
</reference>
<reference key="2">
    <citation type="submission" date="1992-05" db="EMBL/GenBank/DDBJ databases">
        <authorList>
            <person name="Klann E.M."/>
            <person name="Yelle S."/>
            <person name="Bennett A.B."/>
        </authorList>
    </citation>
    <scope>NUCLEOTIDE SEQUENCE [MRNA]</scope>
</reference>
<reference key="3">
    <citation type="journal article" date="1992" name="Jpn. J. Genet.">
        <title>A novel cDNA clone for acid invertase in tomato fruit.</title>
        <authorList>
            <person name="Ohyama A."/>
            <person name="Hirai M."/>
            <person name="Nishimura S."/>
        </authorList>
    </citation>
    <scope>NUCLEOTIDE SEQUENCE [MRNA] OF 1-553</scope>
    <source>
        <tissue>Fruit</tissue>
    </source>
</reference>
<reference key="4">
    <citation type="submission" date="1994-01" db="EMBL/GenBank/DDBJ databases">
        <authorList>
            <person name="Davies K.M."/>
            <person name="Grierson D."/>
        </authorList>
    </citation>
    <scope>NUCLEOTIDE SEQUENCE [MRNA] OF 474-636</scope>
    <source>
        <strain>cv. Ailsa Craig</strain>
        <tissue>Fruit</tissue>
    </source>
</reference>
<organism>
    <name type="scientific">Solanum lycopersicum</name>
    <name type="common">Tomato</name>
    <name type="synonym">Lycopersicon esculentum</name>
    <dbReference type="NCBI Taxonomy" id="4081"/>
    <lineage>
        <taxon>Eukaryota</taxon>
        <taxon>Viridiplantae</taxon>
        <taxon>Streptophyta</taxon>
        <taxon>Embryophyta</taxon>
        <taxon>Tracheophyta</taxon>
        <taxon>Spermatophyta</taxon>
        <taxon>Magnoliopsida</taxon>
        <taxon>eudicotyledons</taxon>
        <taxon>Gunneridae</taxon>
        <taxon>Pentapetalae</taxon>
        <taxon>asterids</taxon>
        <taxon>lamiids</taxon>
        <taxon>Solanales</taxon>
        <taxon>Solanaceae</taxon>
        <taxon>Solanoideae</taxon>
        <taxon>Solaneae</taxon>
        <taxon>Solanum</taxon>
        <taxon>Solanum subgen. Lycopersicon</taxon>
    </lineage>
</organism>
<protein>
    <recommendedName>
        <fullName>Acid beta-fructofuranosidase</fullName>
        <ecNumber>3.2.1.26</ecNumber>
    </recommendedName>
    <alternativeName>
        <fullName>Acid invertase</fullName>
        <shortName>AI</shortName>
    </alternativeName>
    <alternativeName>
        <fullName>Acid sucrose hydrolase</fullName>
    </alternativeName>
    <alternativeName>
        <fullName>Vacuolar invertase</fullName>
    </alternativeName>
</protein>
<accession>P29000</accession>
<feature type="propeptide" id="PRO_0000033374" description="Removed in mature form" evidence="2">
    <location>
        <begin position="1"/>
        <end position="92"/>
    </location>
</feature>
<feature type="chain" id="PRO_0000033375" description="Acid beta-fructofuranosidase">
    <location>
        <begin position="93"/>
        <end position="636"/>
    </location>
</feature>
<feature type="topological domain" description="Cytoplasmic" evidence="9">
    <location>
        <begin position="1"/>
        <end position="31"/>
    </location>
</feature>
<feature type="transmembrane region" description="Helical; Signal-anchor for type II membrane protein" evidence="5">
    <location>
        <begin position="32"/>
        <end position="52"/>
    </location>
</feature>
<feature type="topological domain" description="Lumenal" evidence="9">
    <location>
        <begin position="53"/>
        <end position="636"/>
    </location>
</feature>
<feature type="region of interest" description="Disordered" evidence="7">
    <location>
        <begin position="1"/>
        <end position="24"/>
    </location>
</feature>
<feature type="active site" evidence="6">
    <location>
        <position position="118"/>
    </location>
</feature>
<feature type="binding site" evidence="4">
    <location>
        <begin position="115"/>
        <end position="118"/>
    </location>
    <ligand>
        <name>substrate</name>
    </ligand>
</feature>
<feature type="binding site" evidence="4">
    <location>
        <position position="134"/>
    </location>
    <ligand>
        <name>substrate</name>
    </ligand>
</feature>
<feature type="binding site" evidence="4">
    <location>
        <position position="142"/>
    </location>
    <ligand>
        <name>substrate</name>
    </ligand>
</feature>
<feature type="binding site" evidence="4">
    <location>
        <begin position="177"/>
        <end position="178"/>
    </location>
    <ligand>
        <name>substrate</name>
    </ligand>
</feature>
<feature type="binding site" evidence="4">
    <location>
        <begin position="241"/>
        <end position="242"/>
    </location>
    <ligand>
        <name>substrate</name>
    </ligand>
</feature>
<feature type="binding site" evidence="4">
    <location>
        <position position="297"/>
    </location>
    <ligand>
        <name>substrate</name>
    </ligand>
</feature>
<feature type="binding site" evidence="4">
    <location>
        <position position="330"/>
    </location>
    <ligand>
        <name>substrate</name>
    </ligand>
</feature>
<feature type="glycosylation site" description="N-linked (GlcNAc...) asparagine" evidence="5">
    <location>
        <position position="144"/>
    </location>
</feature>
<feature type="glycosylation site" description="N-linked (GlcNAc...) asparagine" evidence="5">
    <location>
        <position position="211"/>
    </location>
</feature>
<feature type="glycosylation site" description="N-linked (GlcNAc...) asparagine" evidence="5">
    <location>
        <position position="276"/>
    </location>
</feature>
<feature type="glycosylation site" description="N-linked (GlcNAc...) asparagine" evidence="5">
    <location>
        <position position="608"/>
    </location>
</feature>
<feature type="disulfide bond" evidence="4">
    <location>
        <begin position="488"/>
        <end position="536"/>
    </location>
</feature>
<feature type="sequence conflict" description="In Ref. 3; BAA01954." evidence="9" ref="3">
    <original>SSEAPGVGKQVY</original>
    <variation>FAFLSGTINLSL</variation>
    <location>
        <begin position="542"/>
        <end position="553"/>
    </location>
</feature>
<comment type="catalytic activity">
    <reaction evidence="6">
        <text>Hydrolysis of terminal non-reducing beta-D-fructofuranoside residues in beta-D-fructofuranosides.</text>
        <dbReference type="EC" id="3.2.1.26"/>
    </reaction>
</comment>
<comment type="pathway">
    <text>Glycan biosynthesis; sucrose metabolism.</text>
</comment>
<comment type="subunit">
    <text evidence="1">May be present in two forms, a 70 kDa monomer and a heterodimer of the 30 kDa and 38 kDa subunits. The ratio of the levels of the two forms within cells appears to be regulated developmentally (By similarity).</text>
</comment>
<comment type="subcellular location">
    <subcellularLocation>
        <location evidence="5">Membrane</location>
        <topology evidence="5">Single-pass type II membrane protein</topology>
    </subcellularLocation>
    <subcellularLocation>
        <location evidence="8">Vacuole</location>
    </subcellularLocation>
    <subcellularLocation>
        <location evidence="3">Vacuole lumen</location>
    </subcellularLocation>
    <text evidence="3">May be released into the lumen of the vacuole from the tonoplast through a proteolytic processing.</text>
</comment>
<comment type="similarity">
    <text evidence="9">Belongs to the glycosyl hydrolase 32 family.</text>
</comment>
<gene>
    <name type="primary">TIV1</name>
    <name type="synonym">AIV-1</name>
</gene>